<protein>
    <recommendedName>
        <fullName evidence="1">Glyoxylate/hydroxypyruvate reductase B</fullName>
        <ecNumber evidence="1">1.1.1.79</ecNumber>
        <ecNumber evidence="1">1.1.1.81</ecNumber>
    </recommendedName>
</protein>
<reference key="1">
    <citation type="journal article" date="2005" name="Nucleic Acids Res.">
        <title>Genome dynamics and diversity of Shigella species, the etiologic agents of bacillary dysentery.</title>
        <authorList>
            <person name="Yang F."/>
            <person name="Yang J."/>
            <person name="Zhang X."/>
            <person name="Chen L."/>
            <person name="Jiang Y."/>
            <person name="Yan Y."/>
            <person name="Tang X."/>
            <person name="Wang J."/>
            <person name="Xiong Z."/>
            <person name="Dong J."/>
            <person name="Xue Y."/>
            <person name="Zhu Y."/>
            <person name="Xu X."/>
            <person name="Sun L."/>
            <person name="Chen S."/>
            <person name="Nie H."/>
            <person name="Peng J."/>
            <person name="Xu J."/>
            <person name="Wang Y."/>
            <person name="Yuan Z."/>
            <person name="Wen Y."/>
            <person name="Yao Z."/>
            <person name="Shen Y."/>
            <person name="Qiang B."/>
            <person name="Hou Y."/>
            <person name="Yu J."/>
            <person name="Jin Q."/>
        </authorList>
    </citation>
    <scope>NUCLEOTIDE SEQUENCE [LARGE SCALE GENOMIC DNA]</scope>
    <source>
        <strain>Sd197</strain>
    </source>
</reference>
<gene>
    <name evidence="1" type="primary">ghrB</name>
    <name type="ordered locus">SDY_4350</name>
</gene>
<organism>
    <name type="scientific">Shigella dysenteriae serotype 1 (strain Sd197)</name>
    <dbReference type="NCBI Taxonomy" id="300267"/>
    <lineage>
        <taxon>Bacteria</taxon>
        <taxon>Pseudomonadati</taxon>
        <taxon>Pseudomonadota</taxon>
        <taxon>Gammaproteobacteria</taxon>
        <taxon>Enterobacterales</taxon>
        <taxon>Enterobacteriaceae</taxon>
        <taxon>Shigella</taxon>
    </lineage>
</organism>
<feature type="chain" id="PRO_0000348401" description="Glyoxylate/hydroxypyruvate reductase B">
    <location>
        <begin position="1"/>
        <end position="324"/>
    </location>
</feature>
<feature type="active site" evidence="1">
    <location>
        <position position="237"/>
    </location>
</feature>
<feature type="active site" evidence="1">
    <location>
        <position position="266"/>
    </location>
</feature>
<feature type="active site" description="Proton donor" evidence="1">
    <location>
        <position position="285"/>
    </location>
</feature>
<accession>Q328L4</accession>
<keyword id="KW-0963">Cytoplasm</keyword>
<keyword id="KW-0520">NAD</keyword>
<keyword id="KW-0521">NADP</keyword>
<keyword id="KW-0560">Oxidoreductase</keyword>
<keyword id="KW-1185">Reference proteome</keyword>
<name>GHRB_SHIDS</name>
<sequence>MKPSVILYKALPDDLLQRLQEHFTVHQVANLSPQTVDQNAAIFAEAEGLLGSNENVDAALLEKMPRLRATSTISVGYDNFDVDALTARKILLMHTPTVLTETVADTLMALVLSTARRVVEVAERVKAGEWTASIGPDWYGTDVYHKTLGIVGMGRIGMALAQRAHFGFNMPILYNARRHHKEAEERFNARYCDLDTLLQESDFVCLILPLTDETYHLFGAEQFAKMKSSAIFINAGRGPVVDENALIAALQKGEIHAAGLDVFEQEPLSVDSPLLSMANVVAVPHIGSATHETRYGMAACAVDNLIDALQGKVEKNCVNPHVAD</sequence>
<dbReference type="EC" id="1.1.1.79" evidence="1"/>
<dbReference type="EC" id="1.1.1.81" evidence="1"/>
<dbReference type="EMBL" id="CP000034">
    <property type="protein sequence ID" value="ABB64241.1"/>
    <property type="status" value="ALT_INIT"/>
    <property type="molecule type" value="Genomic_DNA"/>
</dbReference>
<dbReference type="RefSeq" id="WP_000805012.1">
    <property type="nucleotide sequence ID" value="NC_007606.1"/>
</dbReference>
<dbReference type="RefSeq" id="YP_405732.2">
    <property type="nucleotide sequence ID" value="NC_007606.1"/>
</dbReference>
<dbReference type="SMR" id="Q328L4"/>
<dbReference type="STRING" id="300267.SDY_4350"/>
<dbReference type="EnsemblBacteria" id="ABB64241">
    <property type="protein sequence ID" value="ABB64241"/>
    <property type="gene ID" value="SDY_4350"/>
</dbReference>
<dbReference type="KEGG" id="sdy:SDY_4350"/>
<dbReference type="PATRIC" id="fig|300267.13.peg.5134"/>
<dbReference type="HOGENOM" id="CLU_019796_1_2_6"/>
<dbReference type="Proteomes" id="UP000002716">
    <property type="component" value="Chromosome"/>
</dbReference>
<dbReference type="GO" id="GO:0005829">
    <property type="term" value="C:cytosol"/>
    <property type="evidence" value="ECO:0007669"/>
    <property type="project" value="TreeGrafter"/>
</dbReference>
<dbReference type="GO" id="GO:0005886">
    <property type="term" value="C:plasma membrane"/>
    <property type="evidence" value="ECO:0007669"/>
    <property type="project" value="UniProtKB-UniRule"/>
</dbReference>
<dbReference type="GO" id="GO:0030267">
    <property type="term" value="F:glyoxylate reductase (NADPH) activity"/>
    <property type="evidence" value="ECO:0007669"/>
    <property type="project" value="UniProtKB-UniRule"/>
</dbReference>
<dbReference type="GO" id="GO:0008465">
    <property type="term" value="F:hydroxypyruvate reductase (NADH) activity"/>
    <property type="evidence" value="ECO:0007669"/>
    <property type="project" value="RHEA"/>
</dbReference>
<dbReference type="GO" id="GO:0120509">
    <property type="term" value="F:hydroxypyruvate reductase (NADPH) activity"/>
    <property type="evidence" value="ECO:0007669"/>
    <property type="project" value="RHEA"/>
</dbReference>
<dbReference type="GO" id="GO:0051287">
    <property type="term" value="F:NAD binding"/>
    <property type="evidence" value="ECO:0007669"/>
    <property type="project" value="InterPro"/>
</dbReference>
<dbReference type="CDD" id="cd05301">
    <property type="entry name" value="GDH"/>
    <property type="match status" value="1"/>
</dbReference>
<dbReference type="FunFam" id="3.40.50.720:FF:000026">
    <property type="entry name" value="Glyoxylate/hydroxypyruvate reductase B"/>
    <property type="match status" value="1"/>
</dbReference>
<dbReference type="Gene3D" id="3.40.50.720">
    <property type="entry name" value="NAD(P)-binding Rossmann-like Domain"/>
    <property type="match status" value="2"/>
</dbReference>
<dbReference type="HAMAP" id="MF_01667">
    <property type="entry name" value="2_Hacid_dh_C_GhrB"/>
    <property type="match status" value="1"/>
</dbReference>
<dbReference type="InterPro" id="IPR050223">
    <property type="entry name" value="D-isomer_2-hydroxyacid_DH"/>
</dbReference>
<dbReference type="InterPro" id="IPR006139">
    <property type="entry name" value="D-isomer_2_OHA_DH_cat_dom"/>
</dbReference>
<dbReference type="InterPro" id="IPR029753">
    <property type="entry name" value="D-isomer_DH_CS"/>
</dbReference>
<dbReference type="InterPro" id="IPR006140">
    <property type="entry name" value="D-isomer_DH_NAD-bd"/>
</dbReference>
<dbReference type="InterPro" id="IPR023756">
    <property type="entry name" value="Glyo/OHPyrv_Rdtase_B"/>
</dbReference>
<dbReference type="InterPro" id="IPR036291">
    <property type="entry name" value="NAD(P)-bd_dom_sf"/>
</dbReference>
<dbReference type="NCBIfam" id="NF011938">
    <property type="entry name" value="PRK15409.1"/>
    <property type="match status" value="1"/>
</dbReference>
<dbReference type="PANTHER" id="PTHR10996">
    <property type="entry name" value="2-HYDROXYACID DEHYDROGENASE-RELATED"/>
    <property type="match status" value="1"/>
</dbReference>
<dbReference type="PANTHER" id="PTHR10996:SF283">
    <property type="entry name" value="GLYOXYLATE_HYDROXYPYRUVATE REDUCTASE B"/>
    <property type="match status" value="1"/>
</dbReference>
<dbReference type="Pfam" id="PF00389">
    <property type="entry name" value="2-Hacid_dh"/>
    <property type="match status" value="1"/>
</dbReference>
<dbReference type="Pfam" id="PF02826">
    <property type="entry name" value="2-Hacid_dh_C"/>
    <property type="match status" value="1"/>
</dbReference>
<dbReference type="SUPFAM" id="SSF52283">
    <property type="entry name" value="Formate/glycerate dehydrogenase catalytic domain-like"/>
    <property type="match status" value="1"/>
</dbReference>
<dbReference type="SUPFAM" id="SSF51735">
    <property type="entry name" value="NAD(P)-binding Rossmann-fold domains"/>
    <property type="match status" value="1"/>
</dbReference>
<dbReference type="PROSITE" id="PS00670">
    <property type="entry name" value="D_2_HYDROXYACID_DH_2"/>
    <property type="match status" value="1"/>
</dbReference>
<dbReference type="PROSITE" id="PS00671">
    <property type="entry name" value="D_2_HYDROXYACID_DH_3"/>
    <property type="match status" value="1"/>
</dbReference>
<evidence type="ECO:0000255" key="1">
    <source>
        <dbReference type="HAMAP-Rule" id="MF_01667"/>
    </source>
</evidence>
<evidence type="ECO:0000305" key="2"/>
<proteinExistence type="inferred from homology"/>
<comment type="function">
    <text evidence="1">Catalyzes the NADPH-dependent reduction of glyoxylate and hydroxypyruvate into glycolate and glycerate, respectively.</text>
</comment>
<comment type="catalytic activity">
    <reaction evidence="1">
        <text>glycolate + NADP(+) = glyoxylate + NADPH + H(+)</text>
        <dbReference type="Rhea" id="RHEA:10992"/>
        <dbReference type="ChEBI" id="CHEBI:15378"/>
        <dbReference type="ChEBI" id="CHEBI:29805"/>
        <dbReference type="ChEBI" id="CHEBI:36655"/>
        <dbReference type="ChEBI" id="CHEBI:57783"/>
        <dbReference type="ChEBI" id="CHEBI:58349"/>
        <dbReference type="EC" id="1.1.1.79"/>
    </reaction>
</comment>
<comment type="catalytic activity">
    <reaction evidence="1">
        <text>(R)-glycerate + NAD(+) = 3-hydroxypyruvate + NADH + H(+)</text>
        <dbReference type="Rhea" id="RHEA:17905"/>
        <dbReference type="ChEBI" id="CHEBI:15378"/>
        <dbReference type="ChEBI" id="CHEBI:16659"/>
        <dbReference type="ChEBI" id="CHEBI:17180"/>
        <dbReference type="ChEBI" id="CHEBI:57540"/>
        <dbReference type="ChEBI" id="CHEBI:57945"/>
        <dbReference type="EC" id="1.1.1.81"/>
    </reaction>
</comment>
<comment type="catalytic activity">
    <reaction evidence="1">
        <text>(R)-glycerate + NADP(+) = 3-hydroxypyruvate + NADPH + H(+)</text>
        <dbReference type="Rhea" id="RHEA:18657"/>
        <dbReference type="ChEBI" id="CHEBI:15378"/>
        <dbReference type="ChEBI" id="CHEBI:16659"/>
        <dbReference type="ChEBI" id="CHEBI:17180"/>
        <dbReference type="ChEBI" id="CHEBI:57783"/>
        <dbReference type="ChEBI" id="CHEBI:58349"/>
        <dbReference type="EC" id="1.1.1.81"/>
    </reaction>
</comment>
<comment type="subunit">
    <text evidence="1">Homodimer.</text>
</comment>
<comment type="subcellular location">
    <subcellularLocation>
        <location evidence="1">Cytoplasm</location>
    </subcellularLocation>
</comment>
<comment type="similarity">
    <text evidence="1">Belongs to the D-isomer specific 2-hydroxyacid dehydrogenase family. GhrB subfamily.</text>
</comment>
<comment type="sequence caution" evidence="2">
    <conflict type="erroneous initiation">
        <sequence resource="EMBL-CDS" id="ABB64241"/>
    </conflict>
</comment>